<proteinExistence type="inferred from homology"/>
<dbReference type="EMBL" id="AF224263">
    <property type="protein sequence ID" value="AAF44636.1"/>
    <property type="molecule type" value="Genomic_DNA"/>
</dbReference>
<dbReference type="SMR" id="Q9IA16"/>
<dbReference type="GO" id="GO:0005634">
    <property type="term" value="C:nucleus"/>
    <property type="evidence" value="ECO:0007669"/>
    <property type="project" value="UniProtKB-SubCell"/>
</dbReference>
<dbReference type="GO" id="GO:0000981">
    <property type="term" value="F:DNA-binding transcription factor activity, RNA polymerase II-specific"/>
    <property type="evidence" value="ECO:0007669"/>
    <property type="project" value="InterPro"/>
</dbReference>
<dbReference type="GO" id="GO:1990837">
    <property type="term" value="F:sequence-specific double-stranded DNA binding"/>
    <property type="evidence" value="ECO:0007669"/>
    <property type="project" value="TreeGrafter"/>
</dbReference>
<dbReference type="CDD" id="cd00086">
    <property type="entry name" value="homeodomain"/>
    <property type="match status" value="1"/>
</dbReference>
<dbReference type="Gene3D" id="1.10.10.60">
    <property type="entry name" value="Homeodomain-like"/>
    <property type="match status" value="1"/>
</dbReference>
<dbReference type="InterPro" id="IPR001356">
    <property type="entry name" value="HD"/>
</dbReference>
<dbReference type="InterPro" id="IPR020479">
    <property type="entry name" value="HD_metazoa"/>
</dbReference>
<dbReference type="InterPro" id="IPR017970">
    <property type="entry name" value="Homeobox_CS"/>
</dbReference>
<dbReference type="InterPro" id="IPR009057">
    <property type="entry name" value="Homeodomain-like_sf"/>
</dbReference>
<dbReference type="PANTHER" id="PTHR46440:SF1">
    <property type="entry name" value="HOMEOBOX PROTEIN HOX-D12"/>
    <property type="match status" value="1"/>
</dbReference>
<dbReference type="PANTHER" id="PTHR46440">
    <property type="entry name" value="HOMEOBOX PROTEIN HOX-D12-RELATED"/>
    <property type="match status" value="1"/>
</dbReference>
<dbReference type="Pfam" id="PF00046">
    <property type="entry name" value="Homeodomain"/>
    <property type="match status" value="1"/>
</dbReference>
<dbReference type="PRINTS" id="PR00024">
    <property type="entry name" value="HOMEOBOX"/>
</dbReference>
<dbReference type="SMART" id="SM00389">
    <property type="entry name" value="HOX"/>
    <property type="match status" value="1"/>
</dbReference>
<dbReference type="SUPFAM" id="SSF46689">
    <property type="entry name" value="Homeodomain-like"/>
    <property type="match status" value="1"/>
</dbReference>
<dbReference type="PROSITE" id="PS00027">
    <property type="entry name" value="HOMEOBOX_1"/>
    <property type="match status" value="1"/>
</dbReference>
<dbReference type="PROSITE" id="PS50071">
    <property type="entry name" value="HOMEOBOX_2"/>
    <property type="match status" value="1"/>
</dbReference>
<evidence type="ECO:0000250" key="1"/>
<evidence type="ECO:0000255" key="2">
    <source>
        <dbReference type="PROSITE-ProRule" id="PRU00108"/>
    </source>
</evidence>
<evidence type="ECO:0000305" key="3"/>
<comment type="function">
    <text evidence="1">Sequence-specific transcription factor which is part of a developmental regulatory system that provides cells with specific positional identities on the anterior-posterior axis.</text>
</comment>
<comment type="subcellular location">
    <subcellularLocation>
        <location evidence="2">Nucleus</location>
    </subcellularLocation>
</comment>
<comment type="similarity">
    <text evidence="3">Belongs to the Abd-B homeobox family.</text>
</comment>
<feature type="chain" id="PRO_0000200242" description="Homeobox protein Hox-D12">
    <location>
        <begin position="1"/>
        <end position="272"/>
    </location>
</feature>
<feature type="DNA-binding region" description="Homeobox" evidence="2">
    <location>
        <begin position="204"/>
        <end position="263"/>
    </location>
</feature>
<keyword id="KW-0217">Developmental protein</keyword>
<keyword id="KW-0238">DNA-binding</keyword>
<keyword id="KW-0371">Homeobox</keyword>
<keyword id="KW-0539">Nucleus</keyword>
<keyword id="KW-0804">Transcription</keyword>
<keyword id="KW-0805">Transcription regulation</keyword>
<sequence length="272" mass="30902">MCEHNLLNSGYVGSLLNFTSPEPFYFANLRPNGTQLATLSPALSYTRRDVCSLPWTSSPCASPPQSRAFSGYSQSYLSNSVSISINRHVSDKAAAGEEPNKYYFQDSSRKVEERCRHNQSYPSDASIPSSVNINPAKYEYPNVETSLHGSSLHNQGFELNSNSPTVNDGIKQSVSLSMSLQSSVTPVCNRSSDGLPWCPTQVRSRRKRKPYTKQQIAELENEFLANEFINRQKRKELSDRLNLSDQQVKIWFQNRRMKKKRLVMREQTLSLF</sequence>
<accession>Q9IA16</accession>
<protein>
    <recommendedName>
        <fullName>Homeobox protein Hox-D12</fullName>
    </recommendedName>
</protein>
<name>HXD12_HETFR</name>
<reference key="1">
    <citation type="journal article" date="2000" name="Proc. Natl. Acad. Sci. U.S.A.">
        <title>Hox cluster genomics in the horn shark, Heterodontus francisci.</title>
        <authorList>
            <person name="Kim C.B."/>
            <person name="Amemiya C."/>
            <person name="Bailey W."/>
            <person name="Kawasaki K."/>
            <person name="Mezey J."/>
            <person name="Miller W."/>
            <person name="Minoshima S."/>
            <person name="Shimizu N."/>
            <person name="Wagner G."/>
            <person name="Ruddle F."/>
        </authorList>
    </citation>
    <scope>NUCLEOTIDE SEQUENCE [GENOMIC DNA]</scope>
</reference>
<gene>
    <name type="primary">HOXD12</name>
</gene>
<organism>
    <name type="scientific">Heterodontus francisci</name>
    <name type="common">Horn shark</name>
    <name type="synonym">Cestracion francisci</name>
    <dbReference type="NCBI Taxonomy" id="7792"/>
    <lineage>
        <taxon>Eukaryota</taxon>
        <taxon>Metazoa</taxon>
        <taxon>Chordata</taxon>
        <taxon>Craniata</taxon>
        <taxon>Vertebrata</taxon>
        <taxon>Chondrichthyes</taxon>
        <taxon>Elasmobranchii</taxon>
        <taxon>Galeomorphii</taxon>
        <taxon>Heterodontoidea</taxon>
        <taxon>Heterodontiformes</taxon>
        <taxon>Heterodontidae</taxon>
        <taxon>Heterodontus</taxon>
    </lineage>
</organism>